<reference key="1">
    <citation type="submission" date="2007-12" db="EMBL/GenBank/DDBJ databases">
        <title>Brucella suis ATCC 23445 whole genome shotgun sequencing project.</title>
        <authorList>
            <person name="Setubal J.C."/>
            <person name="Bowns C."/>
            <person name="Boyle S."/>
            <person name="Crasta O.R."/>
            <person name="Czar M.J."/>
            <person name="Dharmanolla C."/>
            <person name="Gillespie J.J."/>
            <person name="Kenyon R.W."/>
            <person name="Lu J."/>
            <person name="Mane S."/>
            <person name="Mohapatra S."/>
            <person name="Nagrani S."/>
            <person name="Purkayastha A."/>
            <person name="Rajasimha H.K."/>
            <person name="Shallom J.M."/>
            <person name="Shallom S."/>
            <person name="Shukla M."/>
            <person name="Snyder E.E."/>
            <person name="Sobral B.W."/>
            <person name="Wattam A.R."/>
            <person name="Will R."/>
            <person name="Williams K."/>
            <person name="Yoo H."/>
            <person name="Bruce D."/>
            <person name="Detter C."/>
            <person name="Munk C."/>
            <person name="Brettin T.S."/>
        </authorList>
    </citation>
    <scope>NUCLEOTIDE SEQUENCE [LARGE SCALE GENOMIC DNA]</scope>
    <source>
        <strain>ATCC 23445 / NCTC 10510</strain>
    </source>
</reference>
<proteinExistence type="inferred from homology"/>
<name>GUAA_BRUSI</name>
<dbReference type="EC" id="6.3.5.2" evidence="1"/>
<dbReference type="EMBL" id="CP000912">
    <property type="protein sequence ID" value="ABY39370.1"/>
    <property type="molecule type" value="Genomic_DNA"/>
</dbReference>
<dbReference type="RefSeq" id="WP_002966228.1">
    <property type="nucleotide sequence ID" value="NC_010167.1"/>
</dbReference>
<dbReference type="SMR" id="A9WY54"/>
<dbReference type="GeneID" id="97535486"/>
<dbReference type="KEGG" id="bmt:BSUIS_B0366"/>
<dbReference type="HOGENOM" id="CLU_014340_0_5_5"/>
<dbReference type="UniPathway" id="UPA00189">
    <property type="reaction ID" value="UER00296"/>
</dbReference>
<dbReference type="Proteomes" id="UP000008545">
    <property type="component" value="Chromosome II"/>
</dbReference>
<dbReference type="GO" id="GO:0005829">
    <property type="term" value="C:cytosol"/>
    <property type="evidence" value="ECO:0007669"/>
    <property type="project" value="TreeGrafter"/>
</dbReference>
<dbReference type="GO" id="GO:0005524">
    <property type="term" value="F:ATP binding"/>
    <property type="evidence" value="ECO:0007669"/>
    <property type="project" value="UniProtKB-UniRule"/>
</dbReference>
<dbReference type="GO" id="GO:0003921">
    <property type="term" value="F:GMP synthase activity"/>
    <property type="evidence" value="ECO:0007669"/>
    <property type="project" value="InterPro"/>
</dbReference>
<dbReference type="CDD" id="cd01742">
    <property type="entry name" value="GATase1_GMP_Synthase"/>
    <property type="match status" value="1"/>
</dbReference>
<dbReference type="CDD" id="cd01997">
    <property type="entry name" value="GMP_synthase_C"/>
    <property type="match status" value="1"/>
</dbReference>
<dbReference type="FunFam" id="3.30.300.10:FF:000002">
    <property type="entry name" value="GMP synthase [glutamine-hydrolyzing]"/>
    <property type="match status" value="1"/>
</dbReference>
<dbReference type="FunFam" id="3.40.50.620:FF:000001">
    <property type="entry name" value="GMP synthase [glutamine-hydrolyzing]"/>
    <property type="match status" value="1"/>
</dbReference>
<dbReference type="FunFam" id="3.40.50.880:FF:000001">
    <property type="entry name" value="GMP synthase [glutamine-hydrolyzing]"/>
    <property type="match status" value="1"/>
</dbReference>
<dbReference type="Gene3D" id="3.30.300.10">
    <property type="match status" value="1"/>
</dbReference>
<dbReference type="Gene3D" id="3.40.50.880">
    <property type="match status" value="1"/>
</dbReference>
<dbReference type="Gene3D" id="3.40.50.620">
    <property type="entry name" value="HUPs"/>
    <property type="match status" value="1"/>
</dbReference>
<dbReference type="HAMAP" id="MF_00344">
    <property type="entry name" value="GMP_synthase"/>
    <property type="match status" value="1"/>
</dbReference>
<dbReference type="InterPro" id="IPR029062">
    <property type="entry name" value="Class_I_gatase-like"/>
</dbReference>
<dbReference type="InterPro" id="IPR017926">
    <property type="entry name" value="GATASE"/>
</dbReference>
<dbReference type="InterPro" id="IPR001674">
    <property type="entry name" value="GMP_synth_C"/>
</dbReference>
<dbReference type="InterPro" id="IPR004739">
    <property type="entry name" value="GMP_synth_GATase"/>
</dbReference>
<dbReference type="InterPro" id="IPR022955">
    <property type="entry name" value="GMP_synthase"/>
</dbReference>
<dbReference type="InterPro" id="IPR025777">
    <property type="entry name" value="GMPS_ATP_PPase_dom"/>
</dbReference>
<dbReference type="InterPro" id="IPR022310">
    <property type="entry name" value="NAD/GMP_synthase"/>
</dbReference>
<dbReference type="InterPro" id="IPR014729">
    <property type="entry name" value="Rossmann-like_a/b/a_fold"/>
</dbReference>
<dbReference type="NCBIfam" id="TIGR00884">
    <property type="entry name" value="guaA_Cterm"/>
    <property type="match status" value="1"/>
</dbReference>
<dbReference type="NCBIfam" id="TIGR00888">
    <property type="entry name" value="guaA_Nterm"/>
    <property type="match status" value="1"/>
</dbReference>
<dbReference type="NCBIfam" id="NF000848">
    <property type="entry name" value="PRK00074.1"/>
    <property type="match status" value="1"/>
</dbReference>
<dbReference type="PANTHER" id="PTHR11922:SF2">
    <property type="entry name" value="GMP SYNTHASE [GLUTAMINE-HYDROLYZING]"/>
    <property type="match status" value="1"/>
</dbReference>
<dbReference type="PANTHER" id="PTHR11922">
    <property type="entry name" value="GMP SYNTHASE-RELATED"/>
    <property type="match status" value="1"/>
</dbReference>
<dbReference type="Pfam" id="PF00117">
    <property type="entry name" value="GATase"/>
    <property type="match status" value="1"/>
</dbReference>
<dbReference type="Pfam" id="PF00958">
    <property type="entry name" value="GMP_synt_C"/>
    <property type="match status" value="1"/>
</dbReference>
<dbReference type="Pfam" id="PF02540">
    <property type="entry name" value="NAD_synthase"/>
    <property type="match status" value="1"/>
</dbReference>
<dbReference type="PRINTS" id="PR00097">
    <property type="entry name" value="ANTSNTHASEII"/>
</dbReference>
<dbReference type="PRINTS" id="PR00096">
    <property type="entry name" value="GATASE"/>
</dbReference>
<dbReference type="SUPFAM" id="SSF52402">
    <property type="entry name" value="Adenine nucleotide alpha hydrolases-like"/>
    <property type="match status" value="1"/>
</dbReference>
<dbReference type="SUPFAM" id="SSF52317">
    <property type="entry name" value="Class I glutamine amidotransferase-like"/>
    <property type="match status" value="1"/>
</dbReference>
<dbReference type="SUPFAM" id="SSF54810">
    <property type="entry name" value="GMP synthetase C-terminal dimerisation domain"/>
    <property type="match status" value="1"/>
</dbReference>
<dbReference type="PROSITE" id="PS51273">
    <property type="entry name" value="GATASE_TYPE_1"/>
    <property type="match status" value="1"/>
</dbReference>
<dbReference type="PROSITE" id="PS51553">
    <property type="entry name" value="GMPS_ATP_PPASE"/>
    <property type="match status" value="1"/>
</dbReference>
<feature type="chain" id="PRO_1000120228" description="GMP synthase [glutamine-hydrolyzing]">
    <location>
        <begin position="1"/>
        <end position="520"/>
    </location>
</feature>
<feature type="domain" description="Glutamine amidotransferase type-1" evidence="1">
    <location>
        <begin position="9"/>
        <end position="202"/>
    </location>
</feature>
<feature type="domain" description="GMPS ATP-PPase" evidence="1">
    <location>
        <begin position="203"/>
        <end position="395"/>
    </location>
</feature>
<feature type="active site" description="Nucleophile" evidence="1">
    <location>
        <position position="86"/>
    </location>
</feature>
<feature type="active site" evidence="1">
    <location>
        <position position="176"/>
    </location>
</feature>
<feature type="active site" evidence="1">
    <location>
        <position position="178"/>
    </location>
</feature>
<feature type="binding site" evidence="1">
    <location>
        <begin position="230"/>
        <end position="236"/>
    </location>
    <ligand>
        <name>ATP</name>
        <dbReference type="ChEBI" id="CHEBI:30616"/>
    </ligand>
</feature>
<keyword id="KW-0067">ATP-binding</keyword>
<keyword id="KW-0315">Glutamine amidotransferase</keyword>
<keyword id="KW-0332">GMP biosynthesis</keyword>
<keyword id="KW-0436">Ligase</keyword>
<keyword id="KW-0547">Nucleotide-binding</keyword>
<keyword id="KW-0658">Purine biosynthesis</keyword>
<comment type="function">
    <text evidence="1">Catalyzes the synthesis of GMP from XMP.</text>
</comment>
<comment type="catalytic activity">
    <reaction evidence="1">
        <text>XMP + L-glutamine + ATP + H2O = GMP + L-glutamate + AMP + diphosphate + 2 H(+)</text>
        <dbReference type="Rhea" id="RHEA:11680"/>
        <dbReference type="ChEBI" id="CHEBI:15377"/>
        <dbReference type="ChEBI" id="CHEBI:15378"/>
        <dbReference type="ChEBI" id="CHEBI:29985"/>
        <dbReference type="ChEBI" id="CHEBI:30616"/>
        <dbReference type="ChEBI" id="CHEBI:33019"/>
        <dbReference type="ChEBI" id="CHEBI:57464"/>
        <dbReference type="ChEBI" id="CHEBI:58115"/>
        <dbReference type="ChEBI" id="CHEBI:58359"/>
        <dbReference type="ChEBI" id="CHEBI:456215"/>
        <dbReference type="EC" id="6.3.5.2"/>
    </reaction>
</comment>
<comment type="pathway">
    <text evidence="1">Purine metabolism; GMP biosynthesis; GMP from XMP (L-Gln route): step 1/1.</text>
</comment>
<comment type="subunit">
    <text evidence="1">Homodimer.</text>
</comment>
<accession>A9WY54</accession>
<organism>
    <name type="scientific">Brucella suis (strain ATCC 23445 / NCTC 10510)</name>
    <dbReference type="NCBI Taxonomy" id="470137"/>
    <lineage>
        <taxon>Bacteria</taxon>
        <taxon>Pseudomonadati</taxon>
        <taxon>Pseudomonadota</taxon>
        <taxon>Alphaproteobacteria</taxon>
        <taxon>Hyphomicrobiales</taxon>
        <taxon>Brucellaceae</taxon>
        <taxon>Brucella/Ochrobactrum group</taxon>
        <taxon>Brucella</taxon>
    </lineage>
</organism>
<evidence type="ECO:0000255" key="1">
    <source>
        <dbReference type="HAMAP-Rule" id="MF_00344"/>
    </source>
</evidence>
<sequence length="520" mass="57141">MSTTAYPDTILIIDFGSQVTQLIARRVREANVYCEIVPFQSADEAFKRLQPKGVILSGSPHSTTDIGSPRAPQAIFDAGIPVLGICYGEQTMCAQLGGNVESGHDREFGRAFLDVQEDSPLFAGIWAKGTRHQVWMSHGDRVTSLPDGFTIIGTSPNAPYAVIADEKRKYYGVQFHPEVVHTPDGAKLLQNFVHRIVGVKPGWTMGAYREQAVEAIRKQVGSGKVICALSGGVDSSVAALLAHEAVGDQLTCILVDHGLMRKDEAQQVVEMFREHYNLPLILVDASDRFIGALEGESDPEKKRKTIGRLFIEVFEEEARKLGGADFLVQGTLYPDVIESVSFTGGPSVTIKSHHNVGGLPERMKMQLVEPLRELFKDEVRLLGKELGLPDSFIGRHPFPGPGLAIRCPGGVTREKLEILREADAIYLDEIRKAGLYDAIWQAFAVLLPVQTVGVMGDGRTYEFVCALRAVTSVDGMTADFYHYDMNFLGNAATRIINEVRGINRVVYDVTSKPPGTIEWE</sequence>
<gene>
    <name evidence="1" type="primary">guaA</name>
    <name type="ordered locus">BSUIS_B0366</name>
</gene>
<protein>
    <recommendedName>
        <fullName evidence="1">GMP synthase [glutamine-hydrolyzing]</fullName>
        <ecNumber evidence="1">6.3.5.2</ecNumber>
    </recommendedName>
    <alternativeName>
        <fullName evidence="1">GMP synthetase</fullName>
    </alternativeName>
    <alternativeName>
        <fullName evidence="1">Glutamine amidotransferase</fullName>
    </alternativeName>
</protein>